<name>FAEB2_ASPFC</name>
<organism>
    <name type="scientific">Aspergillus fumigatus (strain CBS 144.89 / FGSC A1163 / CEA10)</name>
    <name type="common">Neosartorya fumigata</name>
    <dbReference type="NCBI Taxonomy" id="451804"/>
    <lineage>
        <taxon>Eukaryota</taxon>
        <taxon>Fungi</taxon>
        <taxon>Dikarya</taxon>
        <taxon>Ascomycota</taxon>
        <taxon>Pezizomycotina</taxon>
        <taxon>Eurotiomycetes</taxon>
        <taxon>Eurotiomycetidae</taxon>
        <taxon>Eurotiales</taxon>
        <taxon>Aspergillaceae</taxon>
        <taxon>Aspergillus</taxon>
        <taxon>Aspergillus subgen. Fumigati</taxon>
    </lineage>
</organism>
<evidence type="ECO:0000250" key="1"/>
<evidence type="ECO:0000250" key="2">
    <source>
        <dbReference type="UniProtKB" id="Q2UP89"/>
    </source>
</evidence>
<evidence type="ECO:0000250" key="3">
    <source>
        <dbReference type="UniProtKB" id="Q8WZI8"/>
    </source>
</evidence>
<evidence type="ECO:0000255" key="4"/>
<evidence type="ECO:0000305" key="5"/>
<feature type="signal peptide" evidence="4">
    <location>
        <begin position="1"/>
        <end position="18"/>
    </location>
</feature>
<feature type="chain" id="PRO_0000394927" description="Probable feruloyl esterase B-2">
    <location>
        <begin position="19"/>
        <end position="526"/>
    </location>
</feature>
<feature type="active site" description="Acyl-ester intermediate" evidence="2">
    <location>
        <position position="187"/>
    </location>
</feature>
<feature type="active site" description="Charge relay system" evidence="2">
    <location>
        <position position="400"/>
    </location>
</feature>
<feature type="active site" description="Charge relay system" evidence="2">
    <location>
        <position position="440"/>
    </location>
</feature>
<feature type="binding site" evidence="2">
    <location>
        <position position="256"/>
    </location>
    <ligand>
        <name>Ca(2+)</name>
        <dbReference type="ChEBI" id="CHEBI:29108"/>
    </ligand>
</feature>
<feature type="binding site" evidence="2">
    <location>
        <position position="259"/>
    </location>
    <ligand>
        <name>Ca(2+)</name>
        <dbReference type="ChEBI" id="CHEBI:29108"/>
    </ligand>
</feature>
<feature type="binding site" evidence="2">
    <location>
        <position position="261"/>
    </location>
    <ligand>
        <name>Ca(2+)</name>
        <dbReference type="ChEBI" id="CHEBI:29108"/>
    </ligand>
</feature>
<feature type="binding site" evidence="2">
    <location>
        <position position="263"/>
    </location>
    <ligand>
        <name>Ca(2+)</name>
        <dbReference type="ChEBI" id="CHEBI:29108"/>
    </ligand>
</feature>
<feature type="binding site" evidence="2">
    <location>
        <position position="265"/>
    </location>
    <ligand>
        <name>Ca(2+)</name>
        <dbReference type="ChEBI" id="CHEBI:29108"/>
    </ligand>
</feature>
<feature type="glycosylation site" description="N-linked (GlcNAc...) asparagine" evidence="4">
    <location>
        <position position="52"/>
    </location>
</feature>
<feature type="glycosylation site" description="N-linked (GlcNAc...) asparagine" evidence="4">
    <location>
        <position position="137"/>
    </location>
</feature>
<feature type="glycosylation site" description="N-linked (GlcNAc...) asparagine" evidence="4">
    <location>
        <position position="233"/>
    </location>
</feature>
<feature type="glycosylation site" description="N-linked (GlcNAc...) asparagine" evidence="4">
    <location>
        <position position="311"/>
    </location>
</feature>
<feature type="glycosylation site" description="N-linked (GlcNAc...) asparagine" evidence="4">
    <location>
        <position position="516"/>
    </location>
</feature>
<feature type="disulfide bond" evidence="2">
    <location>
        <begin position="27"/>
        <end position="74"/>
    </location>
</feature>
<feature type="disulfide bond" evidence="2">
    <location>
        <begin position="62"/>
        <end position="113"/>
    </location>
</feature>
<feature type="disulfide bond" evidence="2">
    <location>
        <begin position="186"/>
        <end position="441"/>
    </location>
</feature>
<feature type="disulfide bond" evidence="2">
    <location>
        <begin position="255"/>
        <end position="272"/>
    </location>
</feature>
<feature type="disulfide bond" evidence="2">
    <location>
        <begin position="281"/>
        <end position="291"/>
    </location>
</feature>
<feature type="disulfide bond" evidence="2">
    <location>
        <begin position="503"/>
        <end position="525"/>
    </location>
</feature>
<accession>B0Y7U1</accession>
<sequence length="526" mass="57852">MTKLSLLPLLTLASAVLAKQDAFQAKCASFGRKIKLPNVHVNFVEYVPGGTNLTLPDNDVTCGASSQVVSADMCRVAMAVDTSKSSQITLEAWFPREYTGRFLSTGNGGLSGCIQYYDLAYTAGLGFATVGANNGHNGTSGKPFYQHPEVIEDFAYRSIHTGVVVGKQLTKMFYKEGFDKSYYLGCSTGGRQGFKSIQKYPNDFDGVVAGAPAFNFVNLISWSIHFYSITGSNTSDTYLSPESWKVVHDEIVRQCDEIDGAKDGIIEDTDLCQPVIETIICKPGASDKTNCITGAQAKTVRNVLSPFYGVNGTLLYPRMQPGSELFASSVVYNGQPFRYSTDWYRYVVYNNPDWDATKWTVEDAAVALAQNPYNIQTWDADISSFQKAGGKVLTYHGMQDQLISSDNSKLYYARVAEEMGLGPEELDDFYRFFPVSGMAHCTGGDGAYGIGNGLRTYNGAEPENNVLMAMVQWVEKGIAPEFIRGAKFSNGVGSSVEYTRKHCRYPRRNVYKGPGNYSDENAWECV</sequence>
<reference key="1">
    <citation type="journal article" date="2008" name="PLoS Genet.">
        <title>Genomic islands in the pathogenic filamentous fungus Aspergillus fumigatus.</title>
        <authorList>
            <person name="Fedorova N.D."/>
            <person name="Khaldi N."/>
            <person name="Joardar V.S."/>
            <person name="Maiti R."/>
            <person name="Amedeo P."/>
            <person name="Anderson M.J."/>
            <person name="Crabtree J."/>
            <person name="Silva J.C."/>
            <person name="Badger J.H."/>
            <person name="Albarraq A."/>
            <person name="Angiuoli S."/>
            <person name="Bussey H."/>
            <person name="Bowyer P."/>
            <person name="Cotty P.J."/>
            <person name="Dyer P.S."/>
            <person name="Egan A."/>
            <person name="Galens K."/>
            <person name="Fraser-Liggett C.M."/>
            <person name="Haas B.J."/>
            <person name="Inman J.M."/>
            <person name="Kent R."/>
            <person name="Lemieux S."/>
            <person name="Malavazi I."/>
            <person name="Orvis J."/>
            <person name="Roemer T."/>
            <person name="Ronning C.M."/>
            <person name="Sundaram J.P."/>
            <person name="Sutton G."/>
            <person name="Turner G."/>
            <person name="Venter J.C."/>
            <person name="White O.R."/>
            <person name="Whitty B.R."/>
            <person name="Youngman P."/>
            <person name="Wolfe K.H."/>
            <person name="Goldman G.H."/>
            <person name="Wortman J.R."/>
            <person name="Jiang B."/>
            <person name="Denning D.W."/>
            <person name="Nierman W.C."/>
        </authorList>
    </citation>
    <scope>NUCLEOTIDE SEQUENCE [LARGE SCALE GENOMIC DNA]</scope>
    <source>
        <strain>CBS 144.89 / FGSC A1163 / CEA10</strain>
    </source>
</reference>
<comment type="function">
    <text evidence="3">Involved in degradation of plant cell walls. Hydrolyzes the feruloyl-arabinose ester bond in arabinoxylans as well as the feruloyl-galactose and feruloyl-arabinose ester bonds in pectin.</text>
</comment>
<comment type="catalytic activity">
    <reaction evidence="3">
        <text>feruloyl-polysaccharide + H2O = ferulate + polysaccharide.</text>
        <dbReference type="EC" id="3.1.1.73"/>
    </reaction>
</comment>
<comment type="subcellular location">
    <subcellularLocation>
        <location evidence="1">Secreted</location>
    </subcellularLocation>
</comment>
<comment type="similarity">
    <text evidence="5">Belongs to the tannase family.</text>
</comment>
<proteinExistence type="inferred from homology"/>
<keyword id="KW-0106">Calcium</keyword>
<keyword id="KW-0119">Carbohydrate metabolism</keyword>
<keyword id="KW-1015">Disulfide bond</keyword>
<keyword id="KW-0325">Glycoprotein</keyword>
<keyword id="KW-0378">Hydrolase</keyword>
<keyword id="KW-0479">Metal-binding</keyword>
<keyword id="KW-0624">Polysaccharide degradation</keyword>
<keyword id="KW-0964">Secreted</keyword>
<keyword id="KW-0719">Serine esterase</keyword>
<keyword id="KW-0732">Signal</keyword>
<keyword id="KW-0858">Xylan degradation</keyword>
<dbReference type="EC" id="3.1.1.73" evidence="3"/>
<dbReference type="EMBL" id="DS499599">
    <property type="protein sequence ID" value="EDP49472.1"/>
    <property type="molecule type" value="Genomic_DNA"/>
</dbReference>
<dbReference type="SMR" id="B0Y7U1"/>
<dbReference type="ESTHER" id="aspfu-q4wmr0">
    <property type="family name" value="Tannase"/>
</dbReference>
<dbReference type="GlyCosmos" id="B0Y7U1">
    <property type="glycosylation" value="5 sites, No reported glycans"/>
</dbReference>
<dbReference type="EnsemblFungi" id="EDP49472">
    <property type="protein sequence ID" value="EDP49472"/>
    <property type="gene ID" value="AFUB_074990"/>
</dbReference>
<dbReference type="VEuPathDB" id="FungiDB:AFUB_074990"/>
<dbReference type="HOGENOM" id="CLU_014819_1_0_1"/>
<dbReference type="OrthoDB" id="4157at5052"/>
<dbReference type="PhylomeDB" id="B0Y7U1"/>
<dbReference type="Proteomes" id="UP000001699">
    <property type="component" value="Unassembled WGS sequence"/>
</dbReference>
<dbReference type="GO" id="GO:0005576">
    <property type="term" value="C:extracellular region"/>
    <property type="evidence" value="ECO:0007669"/>
    <property type="project" value="UniProtKB-SubCell"/>
</dbReference>
<dbReference type="GO" id="GO:0030600">
    <property type="term" value="F:feruloyl esterase activity"/>
    <property type="evidence" value="ECO:0007669"/>
    <property type="project" value="UniProtKB-EC"/>
</dbReference>
<dbReference type="GO" id="GO:0046872">
    <property type="term" value="F:metal ion binding"/>
    <property type="evidence" value="ECO:0007669"/>
    <property type="project" value="UniProtKB-KW"/>
</dbReference>
<dbReference type="GO" id="GO:0045493">
    <property type="term" value="P:xylan catabolic process"/>
    <property type="evidence" value="ECO:0007669"/>
    <property type="project" value="UniProtKB-KW"/>
</dbReference>
<dbReference type="Gene3D" id="3.40.50.1820">
    <property type="entry name" value="alpha/beta hydrolase"/>
    <property type="match status" value="1"/>
</dbReference>
<dbReference type="InterPro" id="IPR029058">
    <property type="entry name" value="AB_hydrolase_fold"/>
</dbReference>
<dbReference type="InterPro" id="IPR011118">
    <property type="entry name" value="Tannase/feruloyl_esterase"/>
</dbReference>
<dbReference type="PANTHER" id="PTHR33938">
    <property type="entry name" value="FERULOYL ESTERASE B-RELATED"/>
    <property type="match status" value="1"/>
</dbReference>
<dbReference type="PANTHER" id="PTHR33938:SF15">
    <property type="entry name" value="FERULOYL ESTERASE B-RELATED"/>
    <property type="match status" value="1"/>
</dbReference>
<dbReference type="Pfam" id="PF07519">
    <property type="entry name" value="Tannase"/>
    <property type="match status" value="1"/>
</dbReference>
<dbReference type="SUPFAM" id="SSF53474">
    <property type="entry name" value="alpha/beta-Hydrolases"/>
    <property type="match status" value="1"/>
</dbReference>
<protein>
    <recommendedName>
        <fullName>Probable feruloyl esterase B-2</fullName>
        <ecNumber evidence="3">3.1.1.73</ecNumber>
    </recommendedName>
    <alternativeName>
        <fullName>Ferulic acid esterase B-2</fullName>
        <shortName>FAEB-2</shortName>
    </alternativeName>
</protein>
<gene>
    <name type="primary">faeB-2</name>
    <name type="ORF">AFUB_074990</name>
</gene>